<feature type="chain" id="PRO_0000345530" description="Small ribosomal subunit protein bS18">
    <location>
        <begin position="1"/>
        <end position="79"/>
    </location>
</feature>
<proteinExistence type="inferred from homology"/>
<protein>
    <recommendedName>
        <fullName evidence="1">Small ribosomal subunit protein bS18</fullName>
    </recommendedName>
    <alternativeName>
        <fullName evidence="2">30S ribosomal protein S18</fullName>
    </alternativeName>
</protein>
<dbReference type="EMBL" id="CP000910">
    <property type="protein sequence ID" value="ABY25234.1"/>
    <property type="molecule type" value="Genomic_DNA"/>
</dbReference>
<dbReference type="RefSeq" id="WP_010144869.1">
    <property type="nucleotide sequence ID" value="NC_010168.1"/>
</dbReference>
<dbReference type="SMR" id="A9WVL3"/>
<dbReference type="STRING" id="288705.RSal33209_3525"/>
<dbReference type="KEGG" id="rsa:RSal33209_3525"/>
<dbReference type="eggNOG" id="COG0238">
    <property type="taxonomic scope" value="Bacteria"/>
</dbReference>
<dbReference type="HOGENOM" id="CLU_148710_1_0_11"/>
<dbReference type="Proteomes" id="UP000002007">
    <property type="component" value="Chromosome"/>
</dbReference>
<dbReference type="GO" id="GO:0022627">
    <property type="term" value="C:cytosolic small ribosomal subunit"/>
    <property type="evidence" value="ECO:0007669"/>
    <property type="project" value="TreeGrafter"/>
</dbReference>
<dbReference type="GO" id="GO:0070181">
    <property type="term" value="F:small ribosomal subunit rRNA binding"/>
    <property type="evidence" value="ECO:0007669"/>
    <property type="project" value="TreeGrafter"/>
</dbReference>
<dbReference type="GO" id="GO:0003735">
    <property type="term" value="F:structural constituent of ribosome"/>
    <property type="evidence" value="ECO:0007669"/>
    <property type="project" value="InterPro"/>
</dbReference>
<dbReference type="GO" id="GO:0006412">
    <property type="term" value="P:translation"/>
    <property type="evidence" value="ECO:0007669"/>
    <property type="project" value="UniProtKB-UniRule"/>
</dbReference>
<dbReference type="Gene3D" id="4.10.640.10">
    <property type="entry name" value="Ribosomal protein S18"/>
    <property type="match status" value="1"/>
</dbReference>
<dbReference type="HAMAP" id="MF_00270">
    <property type="entry name" value="Ribosomal_bS18"/>
    <property type="match status" value="1"/>
</dbReference>
<dbReference type="InterPro" id="IPR001648">
    <property type="entry name" value="Ribosomal_bS18"/>
</dbReference>
<dbReference type="InterPro" id="IPR018275">
    <property type="entry name" value="Ribosomal_bS18_CS"/>
</dbReference>
<dbReference type="InterPro" id="IPR036870">
    <property type="entry name" value="Ribosomal_bS18_sf"/>
</dbReference>
<dbReference type="NCBIfam" id="TIGR00165">
    <property type="entry name" value="S18"/>
    <property type="match status" value="1"/>
</dbReference>
<dbReference type="PANTHER" id="PTHR13479">
    <property type="entry name" value="30S RIBOSOMAL PROTEIN S18"/>
    <property type="match status" value="1"/>
</dbReference>
<dbReference type="PANTHER" id="PTHR13479:SF40">
    <property type="entry name" value="SMALL RIBOSOMAL SUBUNIT PROTEIN BS18M"/>
    <property type="match status" value="1"/>
</dbReference>
<dbReference type="Pfam" id="PF01084">
    <property type="entry name" value="Ribosomal_S18"/>
    <property type="match status" value="1"/>
</dbReference>
<dbReference type="PRINTS" id="PR00974">
    <property type="entry name" value="RIBOSOMALS18"/>
</dbReference>
<dbReference type="SUPFAM" id="SSF46911">
    <property type="entry name" value="Ribosomal protein S18"/>
    <property type="match status" value="1"/>
</dbReference>
<dbReference type="PROSITE" id="PS00057">
    <property type="entry name" value="RIBOSOMAL_S18"/>
    <property type="match status" value="1"/>
</dbReference>
<keyword id="KW-1185">Reference proteome</keyword>
<keyword id="KW-0687">Ribonucleoprotein</keyword>
<keyword id="KW-0689">Ribosomal protein</keyword>
<keyword id="KW-0694">RNA-binding</keyword>
<keyword id="KW-0699">rRNA-binding</keyword>
<gene>
    <name evidence="1" type="primary">rpsR</name>
    <name type="ordered locus">RSal33209_3525</name>
</gene>
<sequence length="79" mass="8743">MAKAEIRKPKPKSNPLKAADITVIDYKDVALLRKFISDRGKIRARRVTGVTVQEQRKIAQAIKNAREVALLPYSGAGRG</sequence>
<evidence type="ECO:0000255" key="1">
    <source>
        <dbReference type="HAMAP-Rule" id="MF_00270"/>
    </source>
</evidence>
<evidence type="ECO:0000305" key="2"/>
<name>RS18_RENSM</name>
<organism>
    <name type="scientific">Renibacterium salmoninarum (strain ATCC 33209 / DSM 20767 / JCM 11484 / NBRC 15589 / NCIMB 2235)</name>
    <dbReference type="NCBI Taxonomy" id="288705"/>
    <lineage>
        <taxon>Bacteria</taxon>
        <taxon>Bacillati</taxon>
        <taxon>Actinomycetota</taxon>
        <taxon>Actinomycetes</taxon>
        <taxon>Micrococcales</taxon>
        <taxon>Micrococcaceae</taxon>
        <taxon>Renibacterium</taxon>
    </lineage>
</organism>
<comment type="function">
    <text evidence="1">Binds as a heterodimer with protein bS6 to the central domain of the 16S rRNA, where it helps stabilize the platform of the 30S subunit.</text>
</comment>
<comment type="subunit">
    <text evidence="1">Part of the 30S ribosomal subunit. Forms a tight heterodimer with protein bS6.</text>
</comment>
<comment type="similarity">
    <text evidence="1">Belongs to the bacterial ribosomal protein bS18 family.</text>
</comment>
<accession>A9WVL3</accession>
<reference key="1">
    <citation type="journal article" date="2008" name="J. Bacteriol.">
        <title>Genome sequence of the fish pathogen Renibacterium salmoninarum suggests reductive evolution away from an environmental Arthrobacter ancestor.</title>
        <authorList>
            <person name="Wiens G.D."/>
            <person name="Rockey D.D."/>
            <person name="Wu Z."/>
            <person name="Chang J."/>
            <person name="Levy R."/>
            <person name="Crane S."/>
            <person name="Chen D.S."/>
            <person name="Capri G.R."/>
            <person name="Burnett J.R."/>
            <person name="Sudheesh P.S."/>
            <person name="Schipma M.J."/>
            <person name="Burd H."/>
            <person name="Bhattacharyya A."/>
            <person name="Rhodes L.D."/>
            <person name="Kaul R."/>
            <person name="Strom M.S."/>
        </authorList>
    </citation>
    <scope>NUCLEOTIDE SEQUENCE [LARGE SCALE GENOMIC DNA]</scope>
    <source>
        <strain>ATCC 33209 / DSM 20767 / JCM 11484 / NBRC 15589 / NCIMB 2235</strain>
    </source>
</reference>